<evidence type="ECO:0000303" key="1">
    <source>
    </source>
</evidence>
<evidence type="ECO:0000303" key="2">
    <source>
    </source>
</evidence>
<evidence type="ECO:0000305" key="3"/>
<protein>
    <recommendedName>
        <fullName evidence="1">Type II methyltransferase M.HpaI</fullName>
        <shortName evidence="2">M.HpaI</shortName>
        <ecNumber>2.1.1.72</ecNumber>
    </recommendedName>
    <alternativeName>
        <fullName>Adenine-specific methyltransferase HpaI</fullName>
    </alternativeName>
    <alternativeName>
        <fullName>Modification methylase HpaI</fullName>
    </alternativeName>
</protein>
<gene>
    <name type="primary">hpaIM</name>
</gene>
<proteinExistence type="inferred from homology"/>
<name>MTH1_HAEPA</name>
<sequence length="314" mass="37393">MDQRLICSNAIKALKNLEENSIDLIITDPPYNLGKDYGTTDDNLNFNKYLEFSHEWLEECYRVLKPHGTIYIFMGMKYISYIYKILEQDLGMYFNSWITWYYTQGIGKTRGYSPRHDDILMFTKHPKKFTFNLDRIRVPQKYYRSVNNMRGANPSNVWEFSHVHYCNKNRKPHPTQKPEALYERMILASSNEGDIVLDPFVGSGTLNFVCKHLNRSGIGIDINKEYIEMAKERLDSEFNGFDSIDERMKRCPNDLSDPVIRKQYIINHINWFLKNHENAREEFLNEVKTKYYKKMTQEEKRLLDKENNLSFDFS</sequence>
<dbReference type="EC" id="2.1.1.72"/>
<dbReference type="EMBL" id="D10668">
    <property type="protein sequence ID" value="BAA01519.1"/>
    <property type="molecule type" value="Genomic_DNA"/>
</dbReference>
<dbReference type="PIR" id="S28681">
    <property type="entry name" value="S28681"/>
</dbReference>
<dbReference type="SMR" id="P29538"/>
<dbReference type="REBASE" id="154999">
    <property type="entry name" value="M.VscVS12ORF3208P"/>
</dbReference>
<dbReference type="REBASE" id="157604">
    <property type="entry name" value="M.Rso10709ORF1624P"/>
</dbReference>
<dbReference type="REBASE" id="204128">
    <property type="entry name" value="M.Keu1446ORF2975P"/>
</dbReference>
<dbReference type="REBASE" id="3431">
    <property type="entry name" value="M.HpaI"/>
</dbReference>
<dbReference type="PRO" id="PR:P29538"/>
<dbReference type="GO" id="GO:0005737">
    <property type="term" value="C:cytoplasm"/>
    <property type="evidence" value="ECO:0007669"/>
    <property type="project" value="TreeGrafter"/>
</dbReference>
<dbReference type="GO" id="GO:0003677">
    <property type="term" value="F:DNA binding"/>
    <property type="evidence" value="ECO:0007669"/>
    <property type="project" value="UniProtKB-KW"/>
</dbReference>
<dbReference type="GO" id="GO:0008170">
    <property type="term" value="F:N-methyltransferase activity"/>
    <property type="evidence" value="ECO:0007669"/>
    <property type="project" value="InterPro"/>
</dbReference>
<dbReference type="GO" id="GO:0009007">
    <property type="term" value="F:site-specific DNA-methyltransferase (adenine-specific) activity"/>
    <property type="evidence" value="ECO:0007669"/>
    <property type="project" value="UniProtKB-EC"/>
</dbReference>
<dbReference type="GO" id="GO:0009307">
    <property type="term" value="P:DNA restriction-modification system"/>
    <property type="evidence" value="ECO:0007669"/>
    <property type="project" value="UniProtKB-KW"/>
</dbReference>
<dbReference type="GO" id="GO:0032259">
    <property type="term" value="P:methylation"/>
    <property type="evidence" value="ECO:0007669"/>
    <property type="project" value="UniProtKB-KW"/>
</dbReference>
<dbReference type="CDD" id="cd02440">
    <property type="entry name" value="AdoMet_MTases"/>
    <property type="match status" value="1"/>
</dbReference>
<dbReference type="Gene3D" id="3.40.50.150">
    <property type="entry name" value="Vaccinia Virus protein VP39"/>
    <property type="match status" value="1"/>
</dbReference>
<dbReference type="InterPro" id="IPR002941">
    <property type="entry name" value="DNA_methylase_N4/N6"/>
</dbReference>
<dbReference type="InterPro" id="IPR002052">
    <property type="entry name" value="DNA_methylase_N6_adenine_CS"/>
</dbReference>
<dbReference type="InterPro" id="IPR001091">
    <property type="entry name" value="RM_Methyltransferase"/>
</dbReference>
<dbReference type="InterPro" id="IPR029063">
    <property type="entry name" value="SAM-dependent_MTases_sf"/>
</dbReference>
<dbReference type="PANTHER" id="PTHR13370">
    <property type="entry name" value="RNA METHYLASE-RELATED"/>
    <property type="match status" value="1"/>
</dbReference>
<dbReference type="PANTHER" id="PTHR13370:SF3">
    <property type="entry name" value="TRNA (GUANINE(10)-N2)-METHYLTRANSFERASE HOMOLOG"/>
    <property type="match status" value="1"/>
</dbReference>
<dbReference type="Pfam" id="PF01555">
    <property type="entry name" value="N6_N4_Mtase"/>
    <property type="match status" value="1"/>
</dbReference>
<dbReference type="PRINTS" id="PR00508">
    <property type="entry name" value="S21N4MTFRASE"/>
</dbReference>
<dbReference type="SUPFAM" id="SSF53335">
    <property type="entry name" value="S-adenosyl-L-methionine-dependent methyltransferases"/>
    <property type="match status" value="1"/>
</dbReference>
<dbReference type="PROSITE" id="PS00092">
    <property type="entry name" value="N6_MTASE"/>
    <property type="match status" value="1"/>
</dbReference>
<reference key="1">
    <citation type="journal article" date="1992" name="Nucleic Acids Res.">
        <title>Cloning and expression of the HpaI restriction-modification genes.</title>
        <authorList>
            <person name="Ito H."/>
            <person name="Shimato H."/>
            <person name="Sadaoka A."/>
            <person name="Kotani H."/>
            <person name="Kimizuka F."/>
            <person name="Kato I."/>
        </authorList>
    </citation>
    <scope>NUCLEOTIDE SEQUENCE [GENOMIC DNA]</scope>
    <source>
        <strain>ATCC 49669</strain>
    </source>
</reference>
<reference key="2">
    <citation type="journal article" date="2003" name="Nucleic Acids Res.">
        <title>A nomenclature for restriction enzymes, DNA methyltransferases, homing endonucleases and their genes.</title>
        <authorList>
            <person name="Roberts R.J."/>
            <person name="Belfort M."/>
            <person name="Bestor T."/>
            <person name="Bhagwat A.S."/>
            <person name="Bickle T.A."/>
            <person name="Bitinaite J."/>
            <person name="Blumenthal R.M."/>
            <person name="Degtyarev S.K."/>
            <person name="Dryden D.T."/>
            <person name="Dybvig K."/>
            <person name="Firman K."/>
            <person name="Gromova E.S."/>
            <person name="Gumport R.I."/>
            <person name="Halford S.E."/>
            <person name="Hattman S."/>
            <person name="Heitman J."/>
            <person name="Hornby D.P."/>
            <person name="Janulaitis A."/>
            <person name="Jeltsch A."/>
            <person name="Josephsen J."/>
            <person name="Kiss A."/>
            <person name="Klaenhammer T.R."/>
            <person name="Kobayashi I."/>
            <person name="Kong H."/>
            <person name="Krueger D.H."/>
            <person name="Lacks S."/>
            <person name="Marinus M.G."/>
            <person name="Miyahara M."/>
            <person name="Morgan R.D."/>
            <person name="Murray N.E."/>
            <person name="Nagaraja V."/>
            <person name="Piekarowicz A."/>
            <person name="Pingoud A."/>
            <person name="Raleigh E."/>
            <person name="Rao D.N."/>
            <person name="Reich N."/>
            <person name="Repin V.E."/>
            <person name="Selker E.U."/>
            <person name="Shaw P.C."/>
            <person name="Stein D.C."/>
            <person name="Stoddard B.L."/>
            <person name="Szybalski W."/>
            <person name="Trautner T.A."/>
            <person name="Van Etten J.L."/>
            <person name="Vitor J.M."/>
            <person name="Wilson G.G."/>
            <person name="Xu S.Y."/>
        </authorList>
    </citation>
    <scope>NOMENCLATURE</scope>
    <scope>SUBTYPE</scope>
</reference>
<organism>
    <name type="scientific">Haemophilus parainfluenzae</name>
    <dbReference type="NCBI Taxonomy" id="729"/>
    <lineage>
        <taxon>Bacteria</taxon>
        <taxon>Pseudomonadati</taxon>
        <taxon>Pseudomonadota</taxon>
        <taxon>Gammaproteobacteria</taxon>
        <taxon>Pasteurellales</taxon>
        <taxon>Pasteurellaceae</taxon>
        <taxon>Haemophilus</taxon>
    </lineage>
</organism>
<keyword id="KW-0238">DNA-binding</keyword>
<keyword id="KW-0489">Methyltransferase</keyword>
<keyword id="KW-0680">Restriction system</keyword>
<keyword id="KW-0949">S-adenosyl-L-methionine</keyword>
<keyword id="KW-0808">Transferase</keyword>
<accession>P29538</accession>
<comment type="function">
    <text evidence="1">A beta subtype methylase that recognizes the double-stranded sequence 5'-GTTAAC-3', methylates A-5 on both strands, and protects the DNA from cleavage by the HpaI endonuclease.</text>
</comment>
<comment type="catalytic activity">
    <reaction>
        <text>a 2'-deoxyadenosine in DNA + S-adenosyl-L-methionine = an N(6)-methyl-2'-deoxyadenosine in DNA + S-adenosyl-L-homocysteine + H(+)</text>
        <dbReference type="Rhea" id="RHEA:15197"/>
        <dbReference type="Rhea" id="RHEA-COMP:12418"/>
        <dbReference type="Rhea" id="RHEA-COMP:12419"/>
        <dbReference type="ChEBI" id="CHEBI:15378"/>
        <dbReference type="ChEBI" id="CHEBI:57856"/>
        <dbReference type="ChEBI" id="CHEBI:59789"/>
        <dbReference type="ChEBI" id="CHEBI:90615"/>
        <dbReference type="ChEBI" id="CHEBI:90616"/>
        <dbReference type="EC" id="2.1.1.72"/>
    </reaction>
</comment>
<comment type="similarity">
    <text evidence="3">Belongs to the N(4)/N(6)-methyltransferase family.</text>
</comment>
<feature type="chain" id="PRO_0000087965" description="Type II methyltransferase M.HpaI">
    <location>
        <begin position="1"/>
        <end position="314"/>
    </location>
</feature>